<protein>
    <recommendedName>
        <fullName evidence="1">Trigger factor</fullName>
        <shortName evidence="1">TF</shortName>
        <ecNumber evidence="1">5.2.1.8</ecNumber>
    </recommendedName>
    <alternativeName>
        <fullName evidence="1">PPIase</fullName>
    </alternativeName>
</protein>
<sequence length="445" mass="50588">MGITVLKNEGLDFHARISTPLSEIDDDIQKELLDLTKKVKIAGFRAGKVPVSIVKQKYGTSVRNDVIERRINHSVNHVIKKHNLSIIGRPKIEALQNEPDKALAFTVKIELLPKVTIPDLKKISLDRPKLEVNAKDVEEQLEKLAALTKSYTKESKAKIKDGDQVTIDAIGYIKDEAFEGGQLNDLKVVIGSNALIPSFEKQLIGSKTGSEVDVNVTFPENYHSKDLAGKEARFAVQIKAVHTAEPTVIDDEFAKKFQSNSLEELRTHFAKQIENESEEAINTIMKMNLFDQLEKLLDFDVPASLLEQEKNILKSETDKNNQDESLLKDKSPKEITEYYNKVALRRVRIGLLLAEYAKSKNLQLEPDDLRKVIMQRARNFPGQENMIFDFYKNNPSAIEGLKGPALEDKAVQYIFNNEIKLKEKKYTKEELEKYLEAEEQRITLI</sequence>
<proteinExistence type="inferred from homology"/>
<reference key="1">
    <citation type="submission" date="2007-09" db="EMBL/GenBank/DDBJ databases">
        <title>Complete genome sequence of Rickettsia akari.</title>
        <authorList>
            <person name="Madan A."/>
            <person name="Fahey J."/>
            <person name="Helton E."/>
            <person name="Ketteman M."/>
            <person name="Madan A."/>
            <person name="Rodrigues S."/>
            <person name="Sanchez A."/>
            <person name="Whiting M."/>
            <person name="Dasch G."/>
            <person name="Eremeeva M."/>
        </authorList>
    </citation>
    <scope>NUCLEOTIDE SEQUENCE [LARGE SCALE GENOMIC DNA]</scope>
    <source>
        <strain>Hartford</strain>
    </source>
</reference>
<accession>A8GQ54</accession>
<comment type="function">
    <text evidence="1">Involved in protein export. Acts as a chaperone by maintaining the newly synthesized protein in an open conformation. Functions as a peptidyl-prolyl cis-trans isomerase.</text>
</comment>
<comment type="catalytic activity">
    <reaction evidence="1">
        <text>[protein]-peptidylproline (omega=180) = [protein]-peptidylproline (omega=0)</text>
        <dbReference type="Rhea" id="RHEA:16237"/>
        <dbReference type="Rhea" id="RHEA-COMP:10747"/>
        <dbReference type="Rhea" id="RHEA-COMP:10748"/>
        <dbReference type="ChEBI" id="CHEBI:83833"/>
        <dbReference type="ChEBI" id="CHEBI:83834"/>
        <dbReference type="EC" id="5.2.1.8"/>
    </reaction>
</comment>
<comment type="subcellular location">
    <subcellularLocation>
        <location>Cytoplasm</location>
    </subcellularLocation>
    <text evidence="1">About half TF is bound to the ribosome near the polypeptide exit tunnel while the other half is free in the cytoplasm.</text>
</comment>
<comment type="domain">
    <text evidence="1">Consists of 3 domains; the N-terminus binds the ribosome, the middle domain has PPIase activity, while the C-terminus has intrinsic chaperone activity on its own.</text>
</comment>
<comment type="similarity">
    <text evidence="1">Belongs to the FKBP-type PPIase family. Tig subfamily.</text>
</comment>
<feature type="chain" id="PRO_1000022744" description="Trigger factor">
    <location>
        <begin position="1"/>
        <end position="445"/>
    </location>
</feature>
<feature type="domain" description="PPIase FKBP-type" evidence="1">
    <location>
        <begin position="162"/>
        <end position="247"/>
    </location>
</feature>
<organism>
    <name type="scientific">Rickettsia akari (strain Hartford)</name>
    <dbReference type="NCBI Taxonomy" id="293614"/>
    <lineage>
        <taxon>Bacteria</taxon>
        <taxon>Pseudomonadati</taxon>
        <taxon>Pseudomonadota</taxon>
        <taxon>Alphaproteobacteria</taxon>
        <taxon>Rickettsiales</taxon>
        <taxon>Rickettsiaceae</taxon>
        <taxon>Rickettsieae</taxon>
        <taxon>Rickettsia</taxon>
        <taxon>spotted fever group</taxon>
    </lineage>
</organism>
<name>TIG_RICAH</name>
<gene>
    <name evidence="1" type="primary">tig</name>
    <name type="ordered locus">A1C_06530</name>
</gene>
<keyword id="KW-0131">Cell cycle</keyword>
<keyword id="KW-0132">Cell division</keyword>
<keyword id="KW-0143">Chaperone</keyword>
<keyword id="KW-0963">Cytoplasm</keyword>
<keyword id="KW-0413">Isomerase</keyword>
<keyword id="KW-0697">Rotamase</keyword>
<evidence type="ECO:0000255" key="1">
    <source>
        <dbReference type="HAMAP-Rule" id="MF_00303"/>
    </source>
</evidence>
<dbReference type="EC" id="5.2.1.8" evidence="1"/>
<dbReference type="EMBL" id="CP000847">
    <property type="protein sequence ID" value="ABV75529.1"/>
    <property type="molecule type" value="Genomic_DNA"/>
</dbReference>
<dbReference type="RefSeq" id="WP_012150158.1">
    <property type="nucleotide sequence ID" value="NC_009881.1"/>
</dbReference>
<dbReference type="SMR" id="A8GQ54"/>
<dbReference type="STRING" id="293614.A1C_06530"/>
<dbReference type="KEGG" id="rak:A1C_06530"/>
<dbReference type="eggNOG" id="COG0544">
    <property type="taxonomic scope" value="Bacteria"/>
</dbReference>
<dbReference type="HOGENOM" id="CLU_033058_3_2_5"/>
<dbReference type="Proteomes" id="UP000006830">
    <property type="component" value="Chromosome"/>
</dbReference>
<dbReference type="GO" id="GO:0005737">
    <property type="term" value="C:cytoplasm"/>
    <property type="evidence" value="ECO:0007669"/>
    <property type="project" value="UniProtKB-SubCell"/>
</dbReference>
<dbReference type="GO" id="GO:0003755">
    <property type="term" value="F:peptidyl-prolyl cis-trans isomerase activity"/>
    <property type="evidence" value="ECO:0007669"/>
    <property type="project" value="UniProtKB-UniRule"/>
</dbReference>
<dbReference type="GO" id="GO:0044183">
    <property type="term" value="F:protein folding chaperone"/>
    <property type="evidence" value="ECO:0007669"/>
    <property type="project" value="TreeGrafter"/>
</dbReference>
<dbReference type="GO" id="GO:0043022">
    <property type="term" value="F:ribosome binding"/>
    <property type="evidence" value="ECO:0007669"/>
    <property type="project" value="TreeGrafter"/>
</dbReference>
<dbReference type="GO" id="GO:0051083">
    <property type="term" value="P:'de novo' cotranslational protein folding"/>
    <property type="evidence" value="ECO:0007669"/>
    <property type="project" value="TreeGrafter"/>
</dbReference>
<dbReference type="GO" id="GO:0051301">
    <property type="term" value="P:cell division"/>
    <property type="evidence" value="ECO:0007669"/>
    <property type="project" value="UniProtKB-KW"/>
</dbReference>
<dbReference type="GO" id="GO:0061077">
    <property type="term" value="P:chaperone-mediated protein folding"/>
    <property type="evidence" value="ECO:0007669"/>
    <property type="project" value="TreeGrafter"/>
</dbReference>
<dbReference type="GO" id="GO:0015031">
    <property type="term" value="P:protein transport"/>
    <property type="evidence" value="ECO:0007669"/>
    <property type="project" value="UniProtKB-UniRule"/>
</dbReference>
<dbReference type="GO" id="GO:0043335">
    <property type="term" value="P:protein unfolding"/>
    <property type="evidence" value="ECO:0007669"/>
    <property type="project" value="TreeGrafter"/>
</dbReference>
<dbReference type="FunFam" id="3.10.50.40:FF:000001">
    <property type="entry name" value="Trigger factor"/>
    <property type="match status" value="1"/>
</dbReference>
<dbReference type="Gene3D" id="3.10.50.40">
    <property type="match status" value="1"/>
</dbReference>
<dbReference type="Gene3D" id="3.30.70.1050">
    <property type="entry name" value="Trigger factor ribosome-binding domain"/>
    <property type="match status" value="1"/>
</dbReference>
<dbReference type="Gene3D" id="1.10.3120.10">
    <property type="entry name" value="Trigger factor, C-terminal domain"/>
    <property type="match status" value="1"/>
</dbReference>
<dbReference type="HAMAP" id="MF_00303">
    <property type="entry name" value="Trigger_factor_Tig"/>
    <property type="match status" value="1"/>
</dbReference>
<dbReference type="InterPro" id="IPR046357">
    <property type="entry name" value="PPIase_dom_sf"/>
</dbReference>
<dbReference type="InterPro" id="IPR001179">
    <property type="entry name" value="PPIase_FKBP_dom"/>
</dbReference>
<dbReference type="InterPro" id="IPR005215">
    <property type="entry name" value="Trig_fac"/>
</dbReference>
<dbReference type="InterPro" id="IPR008880">
    <property type="entry name" value="Trigger_fac_C"/>
</dbReference>
<dbReference type="InterPro" id="IPR037041">
    <property type="entry name" value="Trigger_fac_C_sf"/>
</dbReference>
<dbReference type="InterPro" id="IPR008881">
    <property type="entry name" value="Trigger_fac_ribosome-bd_bac"/>
</dbReference>
<dbReference type="InterPro" id="IPR036611">
    <property type="entry name" value="Trigger_fac_ribosome-bd_sf"/>
</dbReference>
<dbReference type="InterPro" id="IPR027304">
    <property type="entry name" value="Trigger_fact/SurA_dom_sf"/>
</dbReference>
<dbReference type="NCBIfam" id="TIGR00115">
    <property type="entry name" value="tig"/>
    <property type="match status" value="1"/>
</dbReference>
<dbReference type="PANTHER" id="PTHR30560">
    <property type="entry name" value="TRIGGER FACTOR CHAPERONE AND PEPTIDYL-PROLYL CIS/TRANS ISOMERASE"/>
    <property type="match status" value="1"/>
</dbReference>
<dbReference type="PANTHER" id="PTHR30560:SF3">
    <property type="entry name" value="TRIGGER FACTOR-LIKE PROTEIN TIG, CHLOROPLASTIC"/>
    <property type="match status" value="1"/>
</dbReference>
<dbReference type="Pfam" id="PF00254">
    <property type="entry name" value="FKBP_C"/>
    <property type="match status" value="1"/>
</dbReference>
<dbReference type="Pfam" id="PF05698">
    <property type="entry name" value="Trigger_C"/>
    <property type="match status" value="1"/>
</dbReference>
<dbReference type="Pfam" id="PF05697">
    <property type="entry name" value="Trigger_N"/>
    <property type="match status" value="1"/>
</dbReference>
<dbReference type="PIRSF" id="PIRSF003095">
    <property type="entry name" value="Trigger_factor"/>
    <property type="match status" value="1"/>
</dbReference>
<dbReference type="SUPFAM" id="SSF54534">
    <property type="entry name" value="FKBP-like"/>
    <property type="match status" value="1"/>
</dbReference>
<dbReference type="SUPFAM" id="SSF109998">
    <property type="entry name" value="Triger factor/SurA peptide-binding domain-like"/>
    <property type="match status" value="1"/>
</dbReference>
<dbReference type="SUPFAM" id="SSF102735">
    <property type="entry name" value="Trigger factor ribosome-binding domain"/>
    <property type="match status" value="1"/>
</dbReference>
<dbReference type="PROSITE" id="PS50059">
    <property type="entry name" value="FKBP_PPIASE"/>
    <property type="match status" value="1"/>
</dbReference>